<protein>
    <recommendedName>
        <fullName>Indian hedgehog protein</fullName>
        <shortName>IHH</shortName>
    </recommendedName>
</protein>
<dbReference type="EMBL" id="U51381">
    <property type="protein sequence ID" value="AAB38602.1"/>
    <property type="molecule type" value="Genomic_DNA"/>
</dbReference>
<dbReference type="SMR" id="O13240"/>
<dbReference type="GO" id="GO:0005615">
    <property type="term" value="C:extracellular space"/>
    <property type="evidence" value="ECO:0007669"/>
    <property type="project" value="TreeGrafter"/>
</dbReference>
<dbReference type="GO" id="GO:0005886">
    <property type="term" value="C:plasma membrane"/>
    <property type="evidence" value="ECO:0007669"/>
    <property type="project" value="UniProtKB-SubCell"/>
</dbReference>
<dbReference type="GO" id="GO:0005509">
    <property type="term" value="F:calcium ion binding"/>
    <property type="evidence" value="ECO:0007669"/>
    <property type="project" value="TreeGrafter"/>
</dbReference>
<dbReference type="GO" id="GO:0005113">
    <property type="term" value="F:patched binding"/>
    <property type="evidence" value="ECO:0007669"/>
    <property type="project" value="TreeGrafter"/>
</dbReference>
<dbReference type="GO" id="GO:0008233">
    <property type="term" value="F:peptidase activity"/>
    <property type="evidence" value="ECO:0007669"/>
    <property type="project" value="UniProtKB-KW"/>
</dbReference>
<dbReference type="GO" id="GO:0001708">
    <property type="term" value="P:cell fate specification"/>
    <property type="evidence" value="ECO:0007669"/>
    <property type="project" value="TreeGrafter"/>
</dbReference>
<dbReference type="GO" id="GO:0007267">
    <property type="term" value="P:cell-cell signaling"/>
    <property type="evidence" value="ECO:0007669"/>
    <property type="project" value="InterPro"/>
</dbReference>
<dbReference type="GO" id="GO:0006508">
    <property type="term" value="P:proteolysis"/>
    <property type="evidence" value="ECO:0007669"/>
    <property type="project" value="UniProtKB-KW"/>
</dbReference>
<dbReference type="GO" id="GO:0010468">
    <property type="term" value="P:regulation of gene expression"/>
    <property type="evidence" value="ECO:0007669"/>
    <property type="project" value="TreeGrafter"/>
</dbReference>
<dbReference type="GO" id="GO:0007224">
    <property type="term" value="P:smoothened signaling pathway"/>
    <property type="evidence" value="ECO:0007669"/>
    <property type="project" value="TreeGrafter"/>
</dbReference>
<dbReference type="Gene3D" id="3.30.1380.10">
    <property type="match status" value="1"/>
</dbReference>
<dbReference type="InterPro" id="IPR001657">
    <property type="entry name" value="Hedgehog"/>
</dbReference>
<dbReference type="InterPro" id="IPR009045">
    <property type="entry name" value="Hedgehog_sig/DD-Pept_Zn-bd_sf"/>
</dbReference>
<dbReference type="InterPro" id="IPR050387">
    <property type="entry name" value="Hedgehog_Signaling"/>
</dbReference>
<dbReference type="InterPro" id="IPR000320">
    <property type="entry name" value="Hedgehog_signalling_dom"/>
</dbReference>
<dbReference type="PANTHER" id="PTHR11889">
    <property type="entry name" value="HEDGEHOG"/>
    <property type="match status" value="1"/>
</dbReference>
<dbReference type="PANTHER" id="PTHR11889:SF39">
    <property type="entry name" value="INDIAN HEDGEHOG PROTEIN"/>
    <property type="match status" value="1"/>
</dbReference>
<dbReference type="Pfam" id="PF01085">
    <property type="entry name" value="HH_signal"/>
    <property type="match status" value="1"/>
</dbReference>
<dbReference type="PRINTS" id="PR00632">
    <property type="entry name" value="SONICHHOG"/>
</dbReference>
<dbReference type="SUPFAM" id="SSF55166">
    <property type="entry name" value="Hedgehog/DD-peptidase"/>
    <property type="match status" value="1"/>
</dbReference>
<feature type="chain" id="PRO_0000058740" description="Indian hedgehog protein">
    <location>
        <begin position="1" status="less than"/>
        <end position="58" status="greater than"/>
    </location>
</feature>
<feature type="binding site" evidence="2">
    <location>
        <position position="13"/>
    </location>
    <ligand>
        <name>Ca(2+)</name>
        <dbReference type="ChEBI" id="CHEBI:29108"/>
        <label>1</label>
    </ligand>
</feature>
<feature type="binding site" evidence="2">
    <location>
        <position position="14"/>
    </location>
    <ligand>
        <name>Ca(2+)</name>
        <dbReference type="ChEBI" id="CHEBI:29108"/>
        <label>1</label>
    </ligand>
</feature>
<feature type="binding site" evidence="2">
    <location>
        <position position="14"/>
    </location>
    <ligand>
        <name>Ca(2+)</name>
        <dbReference type="ChEBI" id="CHEBI:29108"/>
        <label>2</label>
    </ligand>
</feature>
<feature type="binding site" evidence="2">
    <location>
        <position position="17"/>
    </location>
    <ligand>
        <name>Ca(2+)</name>
        <dbReference type="ChEBI" id="CHEBI:29108"/>
        <label>2</label>
    </ligand>
</feature>
<feature type="binding site" evidence="2">
    <location>
        <position position="19"/>
    </location>
    <ligand>
        <name>Ca(2+)</name>
        <dbReference type="ChEBI" id="CHEBI:29108"/>
        <label>2</label>
    </ligand>
</feature>
<feature type="binding site" evidence="2">
    <location>
        <position position="28"/>
    </location>
    <ligand>
        <name>Zn(2+)</name>
        <dbReference type="ChEBI" id="CHEBI:29105"/>
    </ligand>
</feature>
<feature type="binding site" evidence="2">
    <location>
        <position position="35"/>
    </location>
    <ligand>
        <name>Zn(2+)</name>
        <dbReference type="ChEBI" id="CHEBI:29105"/>
    </ligand>
</feature>
<feature type="non-terminal residue">
    <location>
        <position position="1"/>
    </location>
</feature>
<feature type="non-terminal residue">
    <location>
        <position position="58"/>
    </location>
</feature>
<keyword id="KW-0068">Autocatalytic cleavage</keyword>
<keyword id="KW-0106">Calcium</keyword>
<keyword id="KW-1003">Cell membrane</keyword>
<keyword id="KW-0217">Developmental protein</keyword>
<keyword id="KW-0378">Hydrolase</keyword>
<keyword id="KW-0449">Lipoprotein</keyword>
<keyword id="KW-0472">Membrane</keyword>
<keyword id="KW-0479">Metal-binding</keyword>
<keyword id="KW-0564">Palmitate</keyword>
<keyword id="KW-0645">Protease</keyword>
<keyword id="KW-0964">Secreted</keyword>
<keyword id="KW-0862">Zinc</keyword>
<comment type="function">
    <text evidence="1">Intercellular signal essential for a variety of patterning events during development.</text>
</comment>
<comment type="subcellular location">
    <subcellularLocation>
        <location evidence="1">Cell membrane</location>
    </subcellularLocation>
    <subcellularLocation>
        <location evidence="1">Secreted</location>
        <location evidence="1">Extracellular space</location>
    </subcellularLocation>
    <text evidence="1">Indian hedgehog protein N-product: Cell membrane; Lipid-anchor; Extracellular side. The N-terminal peptide remains associated with the cell surface. Indian hedgehog protein C-product: Secreted, extracellular space. The C-terminal peptide diffuses from the cell.</text>
</comment>
<comment type="domain">
    <text evidence="1">The indian hedgehog protein N-product binds calcium and zinc ions; this stabilizes the protein fold and is essential for protein-protein interactions mediated by this domain.</text>
</comment>
<comment type="PTM">
    <text evidence="1">The C-terminal domain displays an autoproteolysis activity and a cholesterol transferase activity. Both activities result in the cleavage of the full-length protein and covalent attachment of a cholesterol moiety to the C-terminal of the newly generated N-terminal fragment (N-product). The N-product is the active species in both local and long-range signaling, whereas the C-product has no signaling activity (By similarity).</text>
</comment>
<comment type="PTM">
    <text evidence="1">Cholesterylation is required for N-product targeting to lipid rafts and multimerization.</text>
</comment>
<comment type="PTM">
    <text evidence="1">N-palmitoylation is required for N-product multimerization and full activity.</text>
</comment>
<comment type="similarity">
    <text evidence="3">Belongs to the hedgehog family.</text>
</comment>
<gene>
    <name type="primary">ihh</name>
</gene>
<reference key="1">
    <citation type="journal article" date="1996" name="Proc. Natl. Acad. Sci. U.S.A.">
        <title>Evolutionary analyses of hedgehog and Hoxd-10 genes in fish species closely related to the zebrafish.</title>
        <authorList>
            <person name="Zardoya R."/>
            <person name="Abouheif E."/>
            <person name="Meyer A."/>
        </authorList>
    </citation>
    <scope>NUCLEOTIDE SEQUENCE [GENOMIC DNA]</scope>
    <source>
        <tissue>Muscle</tissue>
    </source>
</reference>
<name>IHH_DANAT</name>
<sequence length="58" mass="6658">VMNLWPGVRLRVTEGWDEDGHHSEESLHYEGRAVDITTSDRDRNKYAMLARLAVEAGF</sequence>
<organism>
    <name type="scientific">Danio aff. tweediei</name>
    <dbReference type="NCBI Taxonomy" id="46785"/>
    <lineage>
        <taxon>Eukaryota</taxon>
        <taxon>Metazoa</taxon>
        <taxon>Chordata</taxon>
        <taxon>Craniata</taxon>
        <taxon>Vertebrata</taxon>
        <taxon>Euteleostomi</taxon>
        <taxon>Actinopterygii</taxon>
        <taxon>Neopterygii</taxon>
        <taxon>Teleostei</taxon>
        <taxon>Ostariophysi</taxon>
        <taxon>Cypriniformes</taxon>
        <taxon>Danionidae</taxon>
        <taxon>Danioninae</taxon>
        <taxon>Danio</taxon>
    </lineage>
</organism>
<proteinExistence type="inferred from homology"/>
<evidence type="ECO:0000250" key="1"/>
<evidence type="ECO:0000250" key="2">
    <source>
        <dbReference type="UniProtKB" id="Q14623"/>
    </source>
</evidence>
<evidence type="ECO:0000305" key="3"/>
<accession>O13240</accession>
<accession>O13200</accession>